<organism>
    <name type="scientific">Salmonella abortus-equi</name>
    <dbReference type="NCBI Taxonomy" id="607"/>
    <lineage>
        <taxon>Bacteria</taxon>
        <taxon>Pseudomonadati</taxon>
        <taxon>Pseudomonadota</taxon>
        <taxon>Gammaproteobacteria</taxon>
        <taxon>Enterobacterales</taxon>
        <taxon>Enterobacteriaceae</taxon>
        <taxon>Salmonella</taxon>
    </lineage>
</organism>
<keyword id="KW-0229">DNA integration</keyword>
<keyword id="KW-0230">DNA invertase</keyword>
<keyword id="KW-0233">DNA recombination</keyword>
<keyword id="KW-0238">DNA-binding</keyword>
<comment type="function">
    <text>A DNA fragment of approximately 900 base pairs, adjacent to the fljB (H2) gene, which specifies the synthesis of phase-2 flagellin, can exist in either orientation with respect to fljB. The orientation of the inversion region controls expression of fljB. The hin gene occupies about two-thirds of the inversion region; it is required for the inversion of the fljB controlling region.</text>
</comment>
<comment type="similarity">
    <text evidence="3">Belongs to the site-specific recombinase resolvase family.</text>
</comment>
<comment type="caution">
    <text evidence="3">The sequence given here is inactive.</text>
</comment>
<sequence>MATIGYIRVSTIDQNIDLQRNALTSANCDRIFEDRISGKIANRPGLKRALKYVNKGDTLVVWKLDRLGRSVKNLVALISELHERGAHFHSLTDSIDTSSAMGRFFFHVMSAPAEMERELIVERTLAGLAAARAQGRLGGHPRAINRHEQEQISRLLEKGHPRQQLAIIFGIGVSTLYRYFPASRIKKRMN</sequence>
<reference key="1">
    <citation type="journal article" date="1993" name="J. Bacteriol.">
        <title>Conversion of the Salmonella phase 1 flagellin gene fliC to the phase 2 gene fljB on the Escherichia coli K-12 chromosome.</title>
        <authorList>
            <person name="Okazaki N."/>
            <person name="Matsuo S."/>
            <person name="Saito K."/>
            <person name="Tominaga A."/>
            <person name="Enomoto M."/>
        </authorList>
    </citation>
    <scope>NUCLEOTIDE SEQUENCE [GENOMIC DNA]</scope>
</reference>
<protein>
    <recommendedName>
        <fullName>DNA-invertase</fullName>
    </recommendedName>
</protein>
<proteinExistence type="inferred from homology"/>
<name>HIN_SALAE</name>
<gene>
    <name type="primary">hin</name>
</gene>
<feature type="chain" id="PRO_0000196358" description="DNA-invertase">
    <location>
        <begin position="1"/>
        <end position="190"/>
    </location>
</feature>
<feature type="domain" description="Resolvase/invertase-type recombinase catalytic" evidence="2">
    <location>
        <begin position="2"/>
        <end position="135"/>
    </location>
</feature>
<feature type="DNA-binding region" description="H-T-H motif" evidence="1">
    <location>
        <begin position="162"/>
        <end position="181"/>
    </location>
</feature>
<feature type="active site" description="O-(5'-phospho-DNA)-serine intermediate" evidence="2">
    <location>
        <position position="10"/>
    </location>
</feature>
<evidence type="ECO:0000255" key="1"/>
<evidence type="ECO:0000255" key="2">
    <source>
        <dbReference type="PROSITE-ProRule" id="PRU01072"/>
    </source>
</evidence>
<evidence type="ECO:0000305" key="3"/>
<accession>Q02869</accession>
<dbReference type="EMBL" id="D13690">
    <property type="protein sequence ID" value="BAA02847.1"/>
    <property type="molecule type" value="Genomic_DNA"/>
</dbReference>
<dbReference type="RefSeq" id="WP_329539948.1">
    <property type="nucleotide sequence ID" value="NZ_JAZDUC010000035.1"/>
</dbReference>
<dbReference type="SMR" id="Q02869"/>
<dbReference type="GO" id="GO:0003677">
    <property type="term" value="F:DNA binding"/>
    <property type="evidence" value="ECO:0007669"/>
    <property type="project" value="UniProtKB-KW"/>
</dbReference>
<dbReference type="GO" id="GO:0000150">
    <property type="term" value="F:DNA strand exchange activity"/>
    <property type="evidence" value="ECO:0007669"/>
    <property type="project" value="UniProtKB-KW"/>
</dbReference>
<dbReference type="GO" id="GO:0015074">
    <property type="term" value="P:DNA integration"/>
    <property type="evidence" value="ECO:0007669"/>
    <property type="project" value="UniProtKB-KW"/>
</dbReference>
<dbReference type="CDD" id="cd03768">
    <property type="entry name" value="SR_ResInv"/>
    <property type="match status" value="1"/>
</dbReference>
<dbReference type="FunFam" id="3.40.50.1390:FF:000001">
    <property type="entry name" value="DNA recombinase"/>
    <property type="match status" value="1"/>
</dbReference>
<dbReference type="Gene3D" id="1.10.10.60">
    <property type="entry name" value="Homeodomain-like"/>
    <property type="match status" value="1"/>
</dbReference>
<dbReference type="Gene3D" id="3.40.50.1390">
    <property type="entry name" value="Resolvase, N-terminal catalytic domain"/>
    <property type="match status" value="1"/>
</dbReference>
<dbReference type="InterPro" id="IPR009057">
    <property type="entry name" value="Homeodomain-like_sf"/>
</dbReference>
<dbReference type="InterPro" id="IPR006118">
    <property type="entry name" value="Recombinase_CS"/>
</dbReference>
<dbReference type="InterPro" id="IPR006119">
    <property type="entry name" value="Resolv_N"/>
</dbReference>
<dbReference type="InterPro" id="IPR036162">
    <property type="entry name" value="Resolvase-like_N_sf"/>
</dbReference>
<dbReference type="InterPro" id="IPR006120">
    <property type="entry name" value="Resolvase_HTH_dom"/>
</dbReference>
<dbReference type="InterPro" id="IPR050639">
    <property type="entry name" value="SSR_resolvase"/>
</dbReference>
<dbReference type="PANTHER" id="PTHR30461">
    <property type="entry name" value="DNA-INVERTASE FROM LAMBDOID PROPHAGE"/>
    <property type="match status" value="1"/>
</dbReference>
<dbReference type="PANTHER" id="PTHR30461:SF2">
    <property type="entry name" value="SERINE RECOMBINASE PINE-RELATED"/>
    <property type="match status" value="1"/>
</dbReference>
<dbReference type="Pfam" id="PF02796">
    <property type="entry name" value="HTH_7"/>
    <property type="match status" value="1"/>
</dbReference>
<dbReference type="Pfam" id="PF00239">
    <property type="entry name" value="Resolvase"/>
    <property type="match status" value="1"/>
</dbReference>
<dbReference type="SMART" id="SM00857">
    <property type="entry name" value="Resolvase"/>
    <property type="match status" value="1"/>
</dbReference>
<dbReference type="SUPFAM" id="SSF46689">
    <property type="entry name" value="Homeodomain-like"/>
    <property type="match status" value="1"/>
</dbReference>
<dbReference type="SUPFAM" id="SSF53041">
    <property type="entry name" value="Resolvase-like"/>
    <property type="match status" value="1"/>
</dbReference>
<dbReference type="PROSITE" id="PS00397">
    <property type="entry name" value="RECOMBINASES_1"/>
    <property type="match status" value="1"/>
</dbReference>
<dbReference type="PROSITE" id="PS00398">
    <property type="entry name" value="RECOMBINASES_2"/>
    <property type="match status" value="1"/>
</dbReference>
<dbReference type="PROSITE" id="PS51736">
    <property type="entry name" value="RECOMBINASES_3"/>
    <property type="match status" value="1"/>
</dbReference>